<geneLocation type="chloroplast"/>
<proteinExistence type="inferred from homology"/>
<evidence type="ECO:0000255" key="1">
    <source>
        <dbReference type="HAMAP-Rule" id="MF_01390"/>
    </source>
</evidence>
<sequence length="512" mass="60735">MEEFKGYLQKGGFKQQHFLYPLLFQEYIYGLAHDQGLNVNASTFNEPPEISGYGNKYSSLLVKRLIIRIYQQNSFLYSVNNSKQNRFVGHNKNYYYKMICEGFSIVVEIPFSLRLVSSIKETKEIMKFQNLRSIHSLFPFLEDKFSHLNSVSDIVIPYPIHLEILLQILQCWIQDVPTLHLLRLIFYDYHNRSNSITPNKSSYGFSKDNPRLYRFLYNSYVVECESIFYFLRKSSSYLRSTSFRPLLERTHFYGKMKHIGVTCCNDFQKTLWLFKDPFMHYVRYQGKCIIASKGTHLLMKKWKSYFVNLWQCHFHFWSQPSRIHINQFPHFSFYFLGYLSSVPINLSSAKSQMLENAFLIDTFTPKFETMISIIPMIGSLAKAKFCNLSGNPISKPAWAELSDSDIIDRFGRIYRNLSHYYSGSSKKQSLYRIKYILRLSCARTLARKHKSTVRAFLQRLGSEFFEEFFMEEEKVLSLILPRTYYPLHQLSREPIWYLDIIRINDLVNHFDL</sequence>
<accession>Q8WHL6</accession>
<name>MATK_LEMGI</name>
<reference key="1">
    <citation type="journal article" date="2001" name="Syst. Bot.">
        <title>Phylogeny and systematics of Lemnaceae, the duckweed family.</title>
        <authorList>
            <person name="Les D.H."/>
            <person name="Crawford D.J."/>
            <person name="Landolt E."/>
            <person name="Gabel J.D."/>
            <person name="Kimball R.T."/>
        </authorList>
    </citation>
    <scope>NUCLEOTIDE SEQUENCE [GENOMIC DNA]</scope>
    <source>
        <strain>24LGIBBA_6583</strain>
    </source>
</reference>
<gene>
    <name evidence="1" type="primary">matK</name>
</gene>
<feature type="chain" id="PRO_0000143465" description="Maturase K">
    <location>
        <begin position="1"/>
        <end position="512"/>
    </location>
</feature>
<protein>
    <recommendedName>
        <fullName evidence="1">Maturase K</fullName>
    </recommendedName>
    <alternativeName>
        <fullName evidence="1">Intron maturase</fullName>
    </alternativeName>
</protein>
<dbReference type="EMBL" id="AY034197">
    <property type="protein sequence ID" value="AAK61568.1"/>
    <property type="molecule type" value="Genomic_DNA"/>
</dbReference>
<dbReference type="GO" id="GO:0009507">
    <property type="term" value="C:chloroplast"/>
    <property type="evidence" value="ECO:0007669"/>
    <property type="project" value="UniProtKB-SubCell"/>
</dbReference>
<dbReference type="GO" id="GO:0003723">
    <property type="term" value="F:RNA binding"/>
    <property type="evidence" value="ECO:0007669"/>
    <property type="project" value="UniProtKB-KW"/>
</dbReference>
<dbReference type="GO" id="GO:0006397">
    <property type="term" value="P:mRNA processing"/>
    <property type="evidence" value="ECO:0007669"/>
    <property type="project" value="UniProtKB-KW"/>
</dbReference>
<dbReference type="GO" id="GO:0008380">
    <property type="term" value="P:RNA splicing"/>
    <property type="evidence" value="ECO:0007669"/>
    <property type="project" value="UniProtKB-UniRule"/>
</dbReference>
<dbReference type="GO" id="GO:0008033">
    <property type="term" value="P:tRNA processing"/>
    <property type="evidence" value="ECO:0007669"/>
    <property type="project" value="UniProtKB-KW"/>
</dbReference>
<dbReference type="HAMAP" id="MF_01390">
    <property type="entry name" value="MatK"/>
    <property type="match status" value="1"/>
</dbReference>
<dbReference type="InterPro" id="IPR024937">
    <property type="entry name" value="Domain_X"/>
</dbReference>
<dbReference type="InterPro" id="IPR002866">
    <property type="entry name" value="Maturase_MatK"/>
</dbReference>
<dbReference type="InterPro" id="IPR024942">
    <property type="entry name" value="Maturase_MatK_N"/>
</dbReference>
<dbReference type="PANTHER" id="PTHR34811">
    <property type="entry name" value="MATURASE K"/>
    <property type="match status" value="1"/>
</dbReference>
<dbReference type="PANTHER" id="PTHR34811:SF1">
    <property type="entry name" value="MATURASE K"/>
    <property type="match status" value="1"/>
</dbReference>
<dbReference type="Pfam" id="PF01348">
    <property type="entry name" value="Intron_maturas2"/>
    <property type="match status" value="1"/>
</dbReference>
<dbReference type="Pfam" id="PF01824">
    <property type="entry name" value="MatK_N"/>
    <property type="match status" value="1"/>
</dbReference>
<comment type="function">
    <text evidence="1">Usually encoded in the trnK tRNA gene intron. Probably assists in splicing its own and other chloroplast group II introns.</text>
</comment>
<comment type="subcellular location">
    <subcellularLocation>
        <location>Plastid</location>
        <location>Chloroplast</location>
    </subcellularLocation>
</comment>
<comment type="similarity">
    <text evidence="1">Belongs to the intron maturase 2 family. MatK subfamily.</text>
</comment>
<organism>
    <name type="scientific">Lemna gibba</name>
    <name type="common">Swollen duckweed</name>
    <dbReference type="NCBI Taxonomy" id="4470"/>
    <lineage>
        <taxon>Eukaryota</taxon>
        <taxon>Viridiplantae</taxon>
        <taxon>Streptophyta</taxon>
        <taxon>Embryophyta</taxon>
        <taxon>Tracheophyta</taxon>
        <taxon>Spermatophyta</taxon>
        <taxon>Magnoliopsida</taxon>
        <taxon>Liliopsida</taxon>
        <taxon>Araceae</taxon>
        <taxon>Lemnoideae</taxon>
        <taxon>Lemna</taxon>
    </lineage>
</organism>
<keyword id="KW-0150">Chloroplast</keyword>
<keyword id="KW-0507">mRNA processing</keyword>
<keyword id="KW-0934">Plastid</keyword>
<keyword id="KW-0694">RNA-binding</keyword>
<keyword id="KW-0819">tRNA processing</keyword>